<protein>
    <recommendedName>
        <fullName>Serine/arginine-rich SC35-like splicing factor SCL28</fullName>
        <shortName>At-SCL28</shortName>
        <shortName>AtSCL28</shortName>
    </recommendedName>
    <alternativeName>
        <fullName>28 kDa SC35-like splicing factor</fullName>
    </alternativeName>
    <alternativeName>
        <fullName>SC35-like splicing factor 28</fullName>
    </alternativeName>
    <alternativeName>
        <fullName>Serine/arginine-rich splicing factor 28</fullName>
    </alternativeName>
</protein>
<accession>Q1PDV2</accession>
<accession>A0MFG8</accession>
<accession>Q8GTR7</accession>
<accession>Q9FYB0</accession>
<sequence>MARARSRSRSYSPRPRDRSPPRERKGYDDNRLRERPSSRDHESSGPSGLLIRNLPLDARPNDLRDSFERFGPLKDIYLPRNYYTGEPRGFGFVKYRYAEDAAEAMKRMNHKVIGGREIAIVFAEENRKTPQEMRTTNGTSGRHGDYKRTSHRSPRRRYRSHSRSRSPPRRESRHSKVREDDLYSPRRRSRSISRSPLPRNEREYKSRNCRSPREERVLTPIRSRCLSRSRSRSLSR</sequence>
<organism>
    <name type="scientific">Arabidopsis thaliana</name>
    <name type="common">Mouse-ear cress</name>
    <dbReference type="NCBI Taxonomy" id="3702"/>
    <lineage>
        <taxon>Eukaryota</taxon>
        <taxon>Viridiplantae</taxon>
        <taxon>Streptophyta</taxon>
        <taxon>Embryophyta</taxon>
        <taxon>Tracheophyta</taxon>
        <taxon>Spermatophyta</taxon>
        <taxon>Magnoliopsida</taxon>
        <taxon>eudicotyledons</taxon>
        <taxon>Gunneridae</taxon>
        <taxon>Pentapetalae</taxon>
        <taxon>rosids</taxon>
        <taxon>malvids</taxon>
        <taxon>Brassicales</taxon>
        <taxon>Brassicaceae</taxon>
        <taxon>Camelineae</taxon>
        <taxon>Arabidopsis</taxon>
    </lineage>
</organism>
<evidence type="ECO:0000255" key="1">
    <source>
        <dbReference type="PROSITE-ProRule" id="PRU00176"/>
    </source>
</evidence>
<evidence type="ECO:0000256" key="2">
    <source>
        <dbReference type="SAM" id="MobiDB-lite"/>
    </source>
</evidence>
<evidence type="ECO:0000269" key="3">
    <source>
    </source>
</evidence>
<evidence type="ECO:0000269" key="4">
    <source>
    </source>
</evidence>
<evidence type="ECO:0000269" key="5">
    <source>
    </source>
</evidence>
<evidence type="ECO:0000269" key="6">
    <source>
    </source>
</evidence>
<evidence type="ECO:0000305" key="7"/>
<evidence type="ECO:0007744" key="8">
    <source>
    </source>
</evidence>
<reference key="1">
    <citation type="journal article" date="2002" name="J. Biol. Chem.">
        <title>Network of interactions of a novel plant-specific Arg/Ser-rich protein, atRSZ33, with atSC35-like splicing factors.</title>
        <authorList>
            <person name="Lopato S."/>
            <person name="Forstner C."/>
            <person name="Kalyna M."/>
            <person name="Hilscher J."/>
            <person name="Langhammer U."/>
            <person name="Korakod L."/>
            <person name="Zdravko J."/>
            <person name="Barta A."/>
        </authorList>
    </citation>
    <scope>NUCLEOTIDE SEQUENCE [MRNA]</scope>
    <scope>INTERACTION WITH RS2Z33</scope>
</reference>
<reference key="2">
    <citation type="journal article" date="2000" name="Nature">
        <title>Sequence and analysis of chromosome 5 of the plant Arabidopsis thaliana.</title>
        <authorList>
            <person name="Tabata S."/>
            <person name="Kaneko T."/>
            <person name="Nakamura Y."/>
            <person name="Kotani H."/>
            <person name="Kato T."/>
            <person name="Asamizu E."/>
            <person name="Miyajima N."/>
            <person name="Sasamoto S."/>
            <person name="Kimura T."/>
            <person name="Hosouchi T."/>
            <person name="Kawashima K."/>
            <person name="Kohara M."/>
            <person name="Matsumoto M."/>
            <person name="Matsuno A."/>
            <person name="Muraki A."/>
            <person name="Nakayama S."/>
            <person name="Nakazaki N."/>
            <person name="Naruo K."/>
            <person name="Okumura S."/>
            <person name="Shinpo S."/>
            <person name="Takeuchi C."/>
            <person name="Wada T."/>
            <person name="Watanabe A."/>
            <person name="Yamada M."/>
            <person name="Yasuda M."/>
            <person name="Sato S."/>
            <person name="de la Bastide M."/>
            <person name="Huang E."/>
            <person name="Spiegel L."/>
            <person name="Gnoj L."/>
            <person name="O'Shaughnessy A."/>
            <person name="Preston R."/>
            <person name="Habermann K."/>
            <person name="Murray J."/>
            <person name="Johnson D."/>
            <person name="Rohlfing T."/>
            <person name="Nelson J."/>
            <person name="Stoneking T."/>
            <person name="Pepin K."/>
            <person name="Spieth J."/>
            <person name="Sekhon M."/>
            <person name="Armstrong J."/>
            <person name="Becker M."/>
            <person name="Belter E."/>
            <person name="Cordum H."/>
            <person name="Cordes M."/>
            <person name="Courtney L."/>
            <person name="Courtney W."/>
            <person name="Dante M."/>
            <person name="Du H."/>
            <person name="Edwards J."/>
            <person name="Fryman J."/>
            <person name="Haakensen B."/>
            <person name="Lamar E."/>
            <person name="Latreille P."/>
            <person name="Leonard S."/>
            <person name="Meyer R."/>
            <person name="Mulvaney E."/>
            <person name="Ozersky P."/>
            <person name="Riley A."/>
            <person name="Strowmatt C."/>
            <person name="Wagner-McPherson C."/>
            <person name="Wollam A."/>
            <person name="Yoakum M."/>
            <person name="Bell M."/>
            <person name="Dedhia N."/>
            <person name="Parnell L."/>
            <person name="Shah R."/>
            <person name="Rodriguez M."/>
            <person name="Hoon See L."/>
            <person name="Vil D."/>
            <person name="Baker J."/>
            <person name="Kirchoff K."/>
            <person name="Toth K."/>
            <person name="King L."/>
            <person name="Bahret A."/>
            <person name="Miller B."/>
            <person name="Marra M.A."/>
            <person name="Martienssen R."/>
            <person name="McCombie W.R."/>
            <person name="Wilson R.K."/>
            <person name="Murphy G."/>
            <person name="Bancroft I."/>
            <person name="Volckaert G."/>
            <person name="Wambutt R."/>
            <person name="Duesterhoeft A."/>
            <person name="Stiekema W."/>
            <person name="Pohl T."/>
            <person name="Entian K.-D."/>
            <person name="Terryn N."/>
            <person name="Hartley N."/>
            <person name="Bent E."/>
            <person name="Johnson S."/>
            <person name="Langham S.-A."/>
            <person name="McCullagh B."/>
            <person name="Robben J."/>
            <person name="Grymonprez B."/>
            <person name="Zimmermann W."/>
            <person name="Ramsperger U."/>
            <person name="Wedler H."/>
            <person name="Balke K."/>
            <person name="Wedler E."/>
            <person name="Peters S."/>
            <person name="van Staveren M."/>
            <person name="Dirkse W."/>
            <person name="Mooijman P."/>
            <person name="Klein Lankhorst R."/>
            <person name="Weitzenegger T."/>
            <person name="Bothe G."/>
            <person name="Rose M."/>
            <person name="Hauf J."/>
            <person name="Berneiser S."/>
            <person name="Hempel S."/>
            <person name="Feldpausch M."/>
            <person name="Lamberth S."/>
            <person name="Villarroel R."/>
            <person name="Gielen J."/>
            <person name="Ardiles W."/>
            <person name="Bents O."/>
            <person name="Lemcke K."/>
            <person name="Kolesov G."/>
            <person name="Mayer K.F.X."/>
            <person name="Rudd S."/>
            <person name="Schoof H."/>
            <person name="Schueller C."/>
            <person name="Zaccaria P."/>
            <person name="Mewes H.-W."/>
            <person name="Bevan M."/>
            <person name="Fransz P.F."/>
        </authorList>
    </citation>
    <scope>NUCLEOTIDE SEQUENCE [LARGE SCALE GENOMIC DNA]</scope>
    <source>
        <strain>cv. Columbia</strain>
    </source>
</reference>
<reference key="3">
    <citation type="journal article" date="2017" name="Plant J.">
        <title>Araport11: a complete reannotation of the Arabidopsis thaliana reference genome.</title>
        <authorList>
            <person name="Cheng C.Y."/>
            <person name="Krishnakumar V."/>
            <person name="Chan A.P."/>
            <person name="Thibaud-Nissen F."/>
            <person name="Schobel S."/>
            <person name="Town C.D."/>
        </authorList>
    </citation>
    <scope>GENOME REANNOTATION</scope>
    <source>
        <strain>cv. Columbia</strain>
    </source>
</reference>
<reference key="4">
    <citation type="journal article" date="2002" name="Science">
        <title>Functional annotation of a full-length Arabidopsis cDNA collection.</title>
        <authorList>
            <person name="Seki M."/>
            <person name="Narusaka M."/>
            <person name="Kamiya A."/>
            <person name="Ishida J."/>
            <person name="Satou M."/>
            <person name="Sakurai T."/>
            <person name="Nakajima M."/>
            <person name="Enju A."/>
            <person name="Akiyama K."/>
            <person name="Oono Y."/>
            <person name="Muramatsu M."/>
            <person name="Hayashizaki Y."/>
            <person name="Kawai J."/>
            <person name="Carninci P."/>
            <person name="Itoh M."/>
            <person name="Ishii Y."/>
            <person name="Arakawa T."/>
            <person name="Shibata K."/>
            <person name="Shinagawa A."/>
            <person name="Shinozaki K."/>
        </authorList>
    </citation>
    <scope>NUCLEOTIDE SEQUENCE [LARGE SCALE MRNA]</scope>
    <source>
        <strain>cv. Columbia</strain>
    </source>
</reference>
<reference key="5">
    <citation type="journal article" date="2006" name="Plant Biotechnol. J.">
        <title>Simultaneous high-throughput recombinational cloning of open reading frames in closed and open configurations.</title>
        <authorList>
            <person name="Underwood B.A."/>
            <person name="Vanderhaeghen R."/>
            <person name="Whitford R."/>
            <person name="Town C.D."/>
            <person name="Hilson P."/>
        </authorList>
    </citation>
    <scope>NUCLEOTIDE SEQUENCE [LARGE SCALE GENOMIC DNA]</scope>
    <source>
        <strain>cv. Columbia</strain>
    </source>
</reference>
<reference key="6">
    <citation type="journal article" date="2004" name="J. Biol. Chem.">
        <title>Interactions of Arabidopsis RS domain containing cyclophilins with SR proteins and U1 and U11 small nuclear ribonucleoprotein-specific proteins suggest their involvement in pre-mRNA Splicing.</title>
        <authorList>
            <person name="Lorkovic Z.J."/>
            <person name="Lopato S."/>
            <person name="Pexa M."/>
            <person name="Lehner R."/>
            <person name="Barta A."/>
        </authorList>
    </citation>
    <scope>INTERACTION WITH CYP63 AND CYP95</scope>
</reference>
<reference key="7">
    <citation type="journal article" date="2004" name="Mol. Biol. Cell">
        <title>Use of fluorescent protein tags to study nuclear organization of the spliceosomal machinery in transiently transformed living plant cells.</title>
        <authorList>
            <person name="Lorkovic Z.J."/>
            <person name="Hilscher J."/>
            <person name="Barta A."/>
        </authorList>
    </citation>
    <scope>SUBCELLULAR LOCATION</scope>
</reference>
<reference key="8">
    <citation type="journal article" date="2006" name="RNA">
        <title>AtCyp59 is a multidomain cyclophilin from Arabidopsis thaliana that interacts with SR proteins and the C-terminal domain of the RNA polymerase II.</title>
        <authorList>
            <person name="Gullerova M."/>
            <person name="Barta A."/>
            <person name="Lorkovic Z.J."/>
        </authorList>
    </citation>
    <scope>INTERACTION WITH CYP59</scope>
</reference>
<reference key="9">
    <citation type="journal article" date="2008" name="J. Proteome Res.">
        <title>Site-specific phosphorylation profiling of Arabidopsis proteins by mass spectrometry and peptide chip analysis.</title>
        <authorList>
            <person name="de la Fuente van Bentem S."/>
            <person name="Anrather D."/>
            <person name="Dohnal I."/>
            <person name="Roitinger E."/>
            <person name="Csaszar E."/>
            <person name="Joore J."/>
            <person name="Buijnink J."/>
            <person name="Carreri A."/>
            <person name="Forzani C."/>
            <person name="Lorkovic Z.J."/>
            <person name="Barta A."/>
            <person name="Lecourieux D."/>
            <person name="Verhounig A."/>
            <person name="Jonak C."/>
            <person name="Hirt H."/>
        </authorList>
    </citation>
    <scope>PHOSPHORYLATION [LARGE SCALE ANALYSIS] AT SER-184</scope>
    <scope>IDENTIFICATION BY MASS SPECTROMETRY [LARGE SCALE ANALYSIS]</scope>
    <source>
        <tissue>Root</tissue>
    </source>
</reference>
<reference key="10">
    <citation type="journal article" date="2009" name="J. Proteomics">
        <title>Phosphoproteomic analysis of nuclei-enriched fractions from Arabidopsis thaliana.</title>
        <authorList>
            <person name="Jones A.M.E."/>
            <person name="MacLean D."/>
            <person name="Studholme D.J."/>
            <person name="Serna-Sanz A."/>
            <person name="Andreasson E."/>
            <person name="Rathjen J.P."/>
            <person name="Peck S.C."/>
        </authorList>
    </citation>
    <scope>IDENTIFICATION BY MASS SPECTROMETRY [LARGE SCALE ANALYSIS]</scope>
    <source>
        <strain>cv. Columbia</strain>
    </source>
</reference>
<reference key="11">
    <citation type="journal article" date="2010" name="Plant Cell">
        <title>Implementing a rational and consistent nomenclature for serine/arginine-rich protein splicing factors (SR proteins) in plants.</title>
        <authorList>
            <person name="Barta A."/>
            <person name="Kalyna M."/>
            <person name="Reddy A.S."/>
        </authorList>
    </citation>
    <scope>GENE FAMILY</scope>
    <scope>NOMENCLATURE</scope>
</reference>
<reference key="12">
    <citation type="journal article" date="2011" name="PLoS ONE">
        <title>Comparative analysis of serine/arginine-rich proteins across 27 eukaryotes: insights into sub-family classification and extent of alternative splicing.</title>
        <authorList>
            <person name="Richardson D.N."/>
            <person name="Rogers M.F."/>
            <person name="Labadorf A."/>
            <person name="Ben-Hur A."/>
            <person name="Guo H."/>
            <person name="Paterson A.H."/>
            <person name="Reddy A.S.N."/>
        </authorList>
    </citation>
    <scope>GENE FAMILY</scope>
</reference>
<dbReference type="EMBL" id="AJ293797">
    <property type="protein sequence ID" value="CAC03601.1"/>
    <property type="molecule type" value="mRNA"/>
</dbReference>
<dbReference type="EMBL" id="AC068655">
    <property type="status" value="NOT_ANNOTATED_CDS"/>
    <property type="molecule type" value="Genomic_DNA"/>
</dbReference>
<dbReference type="EMBL" id="CP002688">
    <property type="protein sequence ID" value="AED92615.1"/>
    <property type="molecule type" value="Genomic_DNA"/>
</dbReference>
<dbReference type="EMBL" id="AK118752">
    <property type="protein sequence ID" value="BAC43345.1"/>
    <property type="molecule type" value="mRNA"/>
</dbReference>
<dbReference type="EMBL" id="DQ446966">
    <property type="protein sequence ID" value="ABE66166.1"/>
    <property type="molecule type" value="mRNA"/>
</dbReference>
<dbReference type="EMBL" id="DQ653294">
    <property type="protein sequence ID" value="ABK28702.1"/>
    <property type="status" value="ALT_SEQ"/>
    <property type="molecule type" value="mRNA"/>
</dbReference>
<dbReference type="RefSeq" id="NP_197382.3">
    <property type="nucleotide sequence ID" value="NM_121886.4"/>
</dbReference>
<dbReference type="SMR" id="Q1PDV2"/>
<dbReference type="BioGRID" id="17275">
    <property type="interactions" value="13"/>
</dbReference>
<dbReference type="FunCoup" id="Q1PDV2">
    <property type="interactions" value="2140"/>
</dbReference>
<dbReference type="IntAct" id="Q1PDV2">
    <property type="interactions" value="12"/>
</dbReference>
<dbReference type="STRING" id="3702.Q1PDV2"/>
<dbReference type="iPTMnet" id="Q1PDV2"/>
<dbReference type="PaxDb" id="3702-AT5G18810.1"/>
<dbReference type="ProteomicsDB" id="226916"/>
<dbReference type="EnsemblPlants" id="AT5G18810.1">
    <property type="protein sequence ID" value="AT5G18810.1"/>
    <property type="gene ID" value="AT5G18810"/>
</dbReference>
<dbReference type="GeneID" id="831999"/>
<dbReference type="Gramene" id="AT5G18810.1">
    <property type="protein sequence ID" value="AT5G18810.1"/>
    <property type="gene ID" value="AT5G18810"/>
</dbReference>
<dbReference type="KEGG" id="ath:AT5G18810"/>
<dbReference type="Araport" id="AT5G18810"/>
<dbReference type="TAIR" id="AT5G18810">
    <property type="gene designation" value="SCL28"/>
</dbReference>
<dbReference type="eggNOG" id="KOG0118">
    <property type="taxonomic scope" value="Eukaryota"/>
</dbReference>
<dbReference type="HOGENOM" id="CLU_012062_10_1_1"/>
<dbReference type="InParanoid" id="Q1PDV2"/>
<dbReference type="OMA" id="CSPADHR"/>
<dbReference type="PhylomeDB" id="Q1PDV2"/>
<dbReference type="CD-CODE" id="9A8A194B">
    <property type="entry name" value="Nuclear speckle"/>
</dbReference>
<dbReference type="PRO" id="PR:Q1PDV2"/>
<dbReference type="Proteomes" id="UP000006548">
    <property type="component" value="Chromosome 5"/>
</dbReference>
<dbReference type="ExpressionAtlas" id="Q1PDV2">
    <property type="expression patterns" value="baseline and differential"/>
</dbReference>
<dbReference type="GO" id="GO:0016607">
    <property type="term" value="C:nuclear speck"/>
    <property type="evidence" value="ECO:0000314"/>
    <property type="project" value="TAIR"/>
</dbReference>
<dbReference type="GO" id="GO:0005681">
    <property type="term" value="C:spliceosomal complex"/>
    <property type="evidence" value="ECO:0007669"/>
    <property type="project" value="UniProtKB-KW"/>
</dbReference>
<dbReference type="GO" id="GO:0003723">
    <property type="term" value="F:RNA binding"/>
    <property type="evidence" value="ECO:0007669"/>
    <property type="project" value="UniProtKB-KW"/>
</dbReference>
<dbReference type="GO" id="GO:0000398">
    <property type="term" value="P:mRNA splicing, via spliceosome"/>
    <property type="evidence" value="ECO:0000304"/>
    <property type="project" value="TAIR"/>
</dbReference>
<dbReference type="FunFam" id="3.30.70.330:FF:000753">
    <property type="entry name" value="Serine/arginine-rich SC35-like splicing factor SCL28"/>
    <property type="match status" value="1"/>
</dbReference>
<dbReference type="Gene3D" id="3.30.70.330">
    <property type="match status" value="1"/>
</dbReference>
<dbReference type="InterPro" id="IPR012677">
    <property type="entry name" value="Nucleotide-bd_a/b_plait_sf"/>
</dbReference>
<dbReference type="InterPro" id="IPR035979">
    <property type="entry name" value="RBD_domain_sf"/>
</dbReference>
<dbReference type="InterPro" id="IPR050441">
    <property type="entry name" value="RBM"/>
</dbReference>
<dbReference type="InterPro" id="IPR000504">
    <property type="entry name" value="RRM_dom"/>
</dbReference>
<dbReference type="PANTHER" id="PTHR48034">
    <property type="entry name" value="TRANSFORMER-2 SEX-DETERMINING PROTEIN-RELATED"/>
    <property type="match status" value="1"/>
</dbReference>
<dbReference type="Pfam" id="PF00076">
    <property type="entry name" value="RRM_1"/>
    <property type="match status" value="1"/>
</dbReference>
<dbReference type="SMART" id="SM00360">
    <property type="entry name" value="RRM"/>
    <property type="match status" value="1"/>
</dbReference>
<dbReference type="SUPFAM" id="SSF54928">
    <property type="entry name" value="RNA-binding domain, RBD"/>
    <property type="match status" value="1"/>
</dbReference>
<dbReference type="PROSITE" id="PS50102">
    <property type="entry name" value="RRM"/>
    <property type="match status" value="1"/>
</dbReference>
<gene>
    <name type="primary">SCL28</name>
    <name type="ordered locus">At5g18810</name>
    <name type="ORF">F17K4.60</name>
</gene>
<name>SRC28_ARATH</name>
<feature type="chain" id="PRO_0000429599" description="Serine/arginine-rich SC35-like splicing factor SCL28">
    <location>
        <begin position="1"/>
        <end position="236"/>
    </location>
</feature>
<feature type="domain" description="RRM" evidence="1">
    <location>
        <begin position="47"/>
        <end position="125"/>
    </location>
</feature>
<feature type="region of interest" description="Disordered" evidence="2">
    <location>
        <begin position="1"/>
        <end position="53"/>
    </location>
</feature>
<feature type="region of interest" description="Disordered" evidence="2">
    <location>
        <begin position="124"/>
        <end position="219"/>
    </location>
</feature>
<feature type="compositionally biased region" description="Basic and acidic residues" evidence="2">
    <location>
        <begin position="14"/>
        <end position="43"/>
    </location>
</feature>
<feature type="compositionally biased region" description="Basic residues" evidence="2">
    <location>
        <begin position="149"/>
        <end position="176"/>
    </location>
</feature>
<feature type="compositionally biased region" description="Basic and acidic residues" evidence="2">
    <location>
        <begin position="199"/>
        <end position="217"/>
    </location>
</feature>
<feature type="modified residue" description="Phosphoserine" evidence="8">
    <location>
        <position position="184"/>
    </location>
</feature>
<feature type="sequence conflict" description="In Ref. 1; CAC03601." evidence="7" ref="1">
    <original>YYT</original>
    <variation>FNS</variation>
    <location>
        <begin position="82"/>
        <end position="84"/>
    </location>
</feature>
<feature type="sequence conflict" description="In Ref. 4; BAC43345." evidence="7" ref="4">
    <original>P</original>
    <variation>T</variation>
    <location>
        <position position="130"/>
    </location>
</feature>
<feature type="sequence conflict" description="In Ref. 4; BAC43345." evidence="7" ref="4">
    <original>H</original>
    <variation>R</variation>
    <location>
        <position position="143"/>
    </location>
</feature>
<comment type="function">
    <text evidence="7">Involved in intron recognition and spliceosome assembly (Probable). Probably active at the 5' splice sites.</text>
</comment>
<comment type="subunit">
    <text evidence="3 5 6">Component of the spliceosome. Interacts with RS2Z33, CYP59, CYP63 and CYP95.</text>
</comment>
<comment type="interaction">
    <interactant intactId="EBI-927052">
        <id>Q1PDV2</id>
    </interactant>
    <interactant intactId="EBI-2360522">
        <id>Q9LY75</id>
        <label>CYP63</label>
    </interactant>
    <organismsDiffer>false</organismsDiffer>
    <experiments>4</experiments>
</comment>
<comment type="interaction">
    <interactant intactId="EBI-927052">
        <id>Q1PDV2</id>
    </interactant>
    <interactant intactId="EBI-927061">
        <id>Q8L3X8</id>
        <label>SCL30</label>
    </interactant>
    <organismsDiffer>false</organismsDiffer>
    <experiments>3</experiments>
</comment>
<comment type="interaction">
    <interactant intactId="EBI-927052">
        <id>Q1PDV2</id>
    </interactant>
    <interactant intactId="EBI-927082">
        <id>Q9LHP2</id>
        <label>SCL30A</label>
    </interactant>
    <organismsDiffer>false</organismsDiffer>
    <experiments>2</experiments>
</comment>
<comment type="subcellular location">
    <subcellularLocation>
        <location evidence="4">Nucleus speckle</location>
    </subcellularLocation>
</comment>
<comment type="similarity">
    <text evidence="7">Belongs to the splicing factor SR family. SCL subfamily.</text>
</comment>
<comment type="sequence caution" evidence="7">
    <conflict type="erroneous termination">
        <sequence resource="EMBL-CDS" id="ABK28702"/>
    </conflict>
    <text>Extended C-terminus.</text>
</comment>
<keyword id="KW-0507">mRNA processing</keyword>
<keyword id="KW-0508">mRNA splicing</keyword>
<keyword id="KW-0539">Nucleus</keyword>
<keyword id="KW-0597">Phosphoprotein</keyword>
<keyword id="KW-1185">Reference proteome</keyword>
<keyword id="KW-0694">RNA-binding</keyword>
<keyword id="KW-0747">Spliceosome</keyword>
<proteinExistence type="evidence at protein level"/>